<name>RSMG_BURMS</name>
<keyword id="KW-0963">Cytoplasm</keyword>
<keyword id="KW-0489">Methyltransferase</keyword>
<keyword id="KW-0698">rRNA processing</keyword>
<keyword id="KW-0949">S-adenosyl-L-methionine</keyword>
<keyword id="KW-0808">Transferase</keyword>
<organism>
    <name type="scientific">Burkholderia mallei (strain SAVP1)</name>
    <dbReference type="NCBI Taxonomy" id="320388"/>
    <lineage>
        <taxon>Bacteria</taxon>
        <taxon>Pseudomonadati</taxon>
        <taxon>Pseudomonadota</taxon>
        <taxon>Betaproteobacteria</taxon>
        <taxon>Burkholderiales</taxon>
        <taxon>Burkholderiaceae</taxon>
        <taxon>Burkholderia</taxon>
        <taxon>pseudomallei group</taxon>
    </lineage>
</organism>
<feature type="chain" id="PRO_0000335321" description="Ribosomal RNA small subunit methyltransferase G">
    <location>
        <begin position="1"/>
        <end position="232"/>
    </location>
</feature>
<feature type="binding site" evidence="1">
    <location>
        <position position="93"/>
    </location>
    <ligand>
        <name>S-adenosyl-L-methionine</name>
        <dbReference type="ChEBI" id="CHEBI:59789"/>
    </ligand>
</feature>
<feature type="binding site" evidence="1">
    <location>
        <position position="98"/>
    </location>
    <ligand>
        <name>S-adenosyl-L-methionine</name>
        <dbReference type="ChEBI" id="CHEBI:59789"/>
    </ligand>
</feature>
<feature type="binding site" evidence="1">
    <location>
        <begin position="144"/>
        <end position="145"/>
    </location>
    <ligand>
        <name>S-adenosyl-L-methionine</name>
        <dbReference type="ChEBI" id="CHEBI:59789"/>
    </ligand>
</feature>
<feature type="binding site" evidence="1">
    <location>
        <position position="163"/>
    </location>
    <ligand>
        <name>S-adenosyl-L-methionine</name>
        <dbReference type="ChEBI" id="CHEBI:59789"/>
    </ligand>
</feature>
<reference key="1">
    <citation type="journal article" date="2010" name="Genome Biol. Evol.">
        <title>Continuing evolution of Burkholderia mallei through genome reduction and large-scale rearrangements.</title>
        <authorList>
            <person name="Losada L."/>
            <person name="Ronning C.M."/>
            <person name="DeShazer D."/>
            <person name="Woods D."/>
            <person name="Fedorova N."/>
            <person name="Kim H.S."/>
            <person name="Shabalina S.A."/>
            <person name="Pearson T.R."/>
            <person name="Brinkac L."/>
            <person name="Tan P."/>
            <person name="Nandi T."/>
            <person name="Crabtree J."/>
            <person name="Badger J."/>
            <person name="Beckstrom-Sternberg S."/>
            <person name="Saqib M."/>
            <person name="Schutzer S.E."/>
            <person name="Keim P."/>
            <person name="Nierman W.C."/>
        </authorList>
    </citation>
    <scope>NUCLEOTIDE SEQUENCE [LARGE SCALE GENOMIC DNA]</scope>
    <source>
        <strain>SAVP1</strain>
    </source>
</reference>
<proteinExistence type="inferred from homology"/>
<accession>A1V8U2</accession>
<evidence type="ECO:0000255" key="1">
    <source>
        <dbReference type="HAMAP-Rule" id="MF_00074"/>
    </source>
</evidence>
<evidence type="ECO:0000305" key="2"/>
<dbReference type="EC" id="2.1.1.170" evidence="1"/>
<dbReference type="EMBL" id="CP000526">
    <property type="protein sequence ID" value="ABM49691.1"/>
    <property type="status" value="ALT_INIT"/>
    <property type="molecule type" value="Genomic_DNA"/>
</dbReference>
<dbReference type="RefSeq" id="WP_004202905.1">
    <property type="nucleotide sequence ID" value="NC_008785.1"/>
</dbReference>
<dbReference type="SMR" id="A1V8U2"/>
<dbReference type="GeneID" id="92980615"/>
<dbReference type="KEGG" id="bmv:BMASAVP1_A3366"/>
<dbReference type="HOGENOM" id="CLU_065341_2_0_4"/>
<dbReference type="GO" id="GO:0005829">
    <property type="term" value="C:cytosol"/>
    <property type="evidence" value="ECO:0007669"/>
    <property type="project" value="TreeGrafter"/>
</dbReference>
<dbReference type="GO" id="GO:0070043">
    <property type="term" value="F:rRNA (guanine-N7-)-methyltransferase activity"/>
    <property type="evidence" value="ECO:0007669"/>
    <property type="project" value="UniProtKB-UniRule"/>
</dbReference>
<dbReference type="CDD" id="cd02440">
    <property type="entry name" value="AdoMet_MTases"/>
    <property type="match status" value="1"/>
</dbReference>
<dbReference type="Gene3D" id="3.40.50.150">
    <property type="entry name" value="Vaccinia Virus protein VP39"/>
    <property type="match status" value="1"/>
</dbReference>
<dbReference type="HAMAP" id="MF_00074">
    <property type="entry name" value="16SrRNA_methyltr_G"/>
    <property type="match status" value="1"/>
</dbReference>
<dbReference type="InterPro" id="IPR003682">
    <property type="entry name" value="rRNA_ssu_MeTfrase_G"/>
</dbReference>
<dbReference type="InterPro" id="IPR029063">
    <property type="entry name" value="SAM-dependent_MTases_sf"/>
</dbReference>
<dbReference type="NCBIfam" id="TIGR00138">
    <property type="entry name" value="rsmG_gidB"/>
    <property type="match status" value="1"/>
</dbReference>
<dbReference type="PANTHER" id="PTHR31760">
    <property type="entry name" value="S-ADENOSYL-L-METHIONINE-DEPENDENT METHYLTRANSFERASES SUPERFAMILY PROTEIN"/>
    <property type="match status" value="1"/>
</dbReference>
<dbReference type="PANTHER" id="PTHR31760:SF0">
    <property type="entry name" value="S-ADENOSYL-L-METHIONINE-DEPENDENT METHYLTRANSFERASES SUPERFAMILY PROTEIN"/>
    <property type="match status" value="1"/>
</dbReference>
<dbReference type="Pfam" id="PF02527">
    <property type="entry name" value="GidB"/>
    <property type="match status" value="1"/>
</dbReference>
<dbReference type="PIRSF" id="PIRSF003078">
    <property type="entry name" value="GidB"/>
    <property type="match status" value="1"/>
</dbReference>
<dbReference type="SUPFAM" id="SSF53335">
    <property type="entry name" value="S-adenosyl-L-methionine-dependent methyltransferases"/>
    <property type="match status" value="1"/>
</dbReference>
<protein>
    <recommendedName>
        <fullName evidence="1">Ribosomal RNA small subunit methyltransferase G</fullName>
        <ecNumber evidence="1">2.1.1.170</ecNumber>
    </recommendedName>
    <alternativeName>
        <fullName evidence="1">16S rRNA 7-methylguanosine methyltransferase</fullName>
        <shortName evidence="1">16S rRNA m7G methyltransferase</shortName>
    </alternativeName>
</protein>
<sequence>MTVQQRRRPPIASRETLQALLSEGAQALGVALSDAQRGALLDYVALLAKWNAVYNLTAIRDPRQMLIQHILDSLSIVPHLGAHGAAAAALDVGSGGGLPGVVLAIALPGWRVTLNDIVHKKSAFQNQAKAELKLGNLSVVTGRVETLRPGADVPAKFDVIVSRAFADLADFVTLARHLVAPGGSIWAMKGVRPDEEIGRLPDGARVKQMIRLTVPSLDAERHLIEVELDEAI</sequence>
<gene>
    <name evidence="1" type="primary">rsmG</name>
    <name type="ordered locus">BMASAVP1_A3366</name>
</gene>
<comment type="function">
    <text evidence="1">Specifically methylates the N7 position of guanine in position 527 of 16S rRNA.</text>
</comment>
<comment type="catalytic activity">
    <reaction evidence="1">
        <text>guanosine(527) in 16S rRNA + S-adenosyl-L-methionine = N(7)-methylguanosine(527) in 16S rRNA + S-adenosyl-L-homocysteine</text>
        <dbReference type="Rhea" id="RHEA:42732"/>
        <dbReference type="Rhea" id="RHEA-COMP:10209"/>
        <dbReference type="Rhea" id="RHEA-COMP:10210"/>
        <dbReference type="ChEBI" id="CHEBI:57856"/>
        <dbReference type="ChEBI" id="CHEBI:59789"/>
        <dbReference type="ChEBI" id="CHEBI:74269"/>
        <dbReference type="ChEBI" id="CHEBI:74480"/>
        <dbReference type="EC" id="2.1.1.170"/>
    </reaction>
</comment>
<comment type="subcellular location">
    <subcellularLocation>
        <location evidence="1">Cytoplasm</location>
    </subcellularLocation>
</comment>
<comment type="similarity">
    <text evidence="1">Belongs to the methyltransferase superfamily. RNA methyltransferase RsmG family.</text>
</comment>
<comment type="sequence caution" evidence="2">
    <conflict type="erroneous initiation">
        <sequence resource="EMBL-CDS" id="ABM49691"/>
    </conflict>
</comment>